<dbReference type="EC" id="3.2.1.52" evidence="1"/>
<dbReference type="EMBL" id="AM421808">
    <property type="protein sequence ID" value="CAM09769.1"/>
    <property type="molecule type" value="Genomic_DNA"/>
</dbReference>
<dbReference type="RefSeq" id="WP_002219713.1">
    <property type="nucleotide sequence ID" value="NC_008767.1"/>
</dbReference>
<dbReference type="SMR" id="A1KSD9"/>
<dbReference type="CAZy" id="GH3">
    <property type="family name" value="Glycoside Hydrolase Family 3"/>
</dbReference>
<dbReference type="KEGG" id="nmc:NMC0469"/>
<dbReference type="HOGENOM" id="CLU_008392_0_0_4"/>
<dbReference type="UniPathway" id="UPA00544"/>
<dbReference type="Proteomes" id="UP000002286">
    <property type="component" value="Chromosome"/>
</dbReference>
<dbReference type="GO" id="GO:0005737">
    <property type="term" value="C:cytoplasm"/>
    <property type="evidence" value="ECO:0007669"/>
    <property type="project" value="UniProtKB-SubCell"/>
</dbReference>
<dbReference type="GO" id="GO:0004563">
    <property type="term" value="F:beta-N-acetylhexosaminidase activity"/>
    <property type="evidence" value="ECO:0007669"/>
    <property type="project" value="UniProtKB-UniRule"/>
</dbReference>
<dbReference type="GO" id="GO:0005975">
    <property type="term" value="P:carbohydrate metabolic process"/>
    <property type="evidence" value="ECO:0007669"/>
    <property type="project" value="InterPro"/>
</dbReference>
<dbReference type="GO" id="GO:0051301">
    <property type="term" value="P:cell division"/>
    <property type="evidence" value="ECO:0007669"/>
    <property type="project" value="UniProtKB-KW"/>
</dbReference>
<dbReference type="GO" id="GO:0071555">
    <property type="term" value="P:cell wall organization"/>
    <property type="evidence" value="ECO:0007669"/>
    <property type="project" value="UniProtKB-KW"/>
</dbReference>
<dbReference type="GO" id="GO:0009252">
    <property type="term" value="P:peptidoglycan biosynthetic process"/>
    <property type="evidence" value="ECO:0007669"/>
    <property type="project" value="UniProtKB-KW"/>
</dbReference>
<dbReference type="GO" id="GO:0009254">
    <property type="term" value="P:peptidoglycan turnover"/>
    <property type="evidence" value="ECO:0007669"/>
    <property type="project" value="UniProtKB-UniRule"/>
</dbReference>
<dbReference type="GO" id="GO:0008360">
    <property type="term" value="P:regulation of cell shape"/>
    <property type="evidence" value="ECO:0007669"/>
    <property type="project" value="UniProtKB-KW"/>
</dbReference>
<dbReference type="FunFam" id="3.20.20.300:FF:000001">
    <property type="entry name" value="Beta-hexosaminidase"/>
    <property type="match status" value="1"/>
</dbReference>
<dbReference type="Gene3D" id="3.20.20.300">
    <property type="entry name" value="Glycoside hydrolase, family 3, N-terminal domain"/>
    <property type="match status" value="1"/>
</dbReference>
<dbReference type="HAMAP" id="MF_00364">
    <property type="entry name" value="NagZ"/>
    <property type="match status" value="1"/>
</dbReference>
<dbReference type="InterPro" id="IPR022956">
    <property type="entry name" value="Beta_hexosaminidase_bac"/>
</dbReference>
<dbReference type="InterPro" id="IPR019800">
    <property type="entry name" value="Glyco_hydro_3_AS"/>
</dbReference>
<dbReference type="InterPro" id="IPR001764">
    <property type="entry name" value="Glyco_hydro_3_N"/>
</dbReference>
<dbReference type="InterPro" id="IPR036962">
    <property type="entry name" value="Glyco_hydro_3_N_sf"/>
</dbReference>
<dbReference type="InterPro" id="IPR017853">
    <property type="entry name" value="Glycoside_hydrolase_SF"/>
</dbReference>
<dbReference type="InterPro" id="IPR050226">
    <property type="entry name" value="NagZ_Beta-hexosaminidase"/>
</dbReference>
<dbReference type="NCBIfam" id="NF003740">
    <property type="entry name" value="PRK05337.1"/>
    <property type="match status" value="1"/>
</dbReference>
<dbReference type="PANTHER" id="PTHR30480:SF13">
    <property type="entry name" value="BETA-HEXOSAMINIDASE"/>
    <property type="match status" value="1"/>
</dbReference>
<dbReference type="PANTHER" id="PTHR30480">
    <property type="entry name" value="BETA-HEXOSAMINIDASE-RELATED"/>
    <property type="match status" value="1"/>
</dbReference>
<dbReference type="Pfam" id="PF00933">
    <property type="entry name" value="Glyco_hydro_3"/>
    <property type="match status" value="1"/>
</dbReference>
<dbReference type="SUPFAM" id="SSF51445">
    <property type="entry name" value="(Trans)glycosidases"/>
    <property type="match status" value="1"/>
</dbReference>
<dbReference type="PROSITE" id="PS00775">
    <property type="entry name" value="GLYCOSYL_HYDROL_F3"/>
    <property type="match status" value="1"/>
</dbReference>
<reference key="1">
    <citation type="journal article" date="2007" name="PLoS Genet.">
        <title>Meningococcal genetic variation mechanisms viewed through comparative analysis of serogroup C strain FAM18.</title>
        <authorList>
            <person name="Bentley S.D."/>
            <person name="Vernikos G.S."/>
            <person name="Snyder L.A.S."/>
            <person name="Churcher C."/>
            <person name="Arrowsmith C."/>
            <person name="Chillingworth T."/>
            <person name="Cronin A."/>
            <person name="Davis P.H."/>
            <person name="Holroyd N.E."/>
            <person name="Jagels K."/>
            <person name="Maddison M."/>
            <person name="Moule S."/>
            <person name="Rabbinowitsch E."/>
            <person name="Sharp S."/>
            <person name="Unwin L."/>
            <person name="Whitehead S."/>
            <person name="Quail M.A."/>
            <person name="Achtman M."/>
            <person name="Barrell B.G."/>
            <person name="Saunders N.J."/>
            <person name="Parkhill J."/>
        </authorList>
    </citation>
    <scope>NUCLEOTIDE SEQUENCE [LARGE SCALE GENOMIC DNA]</scope>
    <source>
        <strain>ATCC 700532 / DSM 15464 / FAM18</strain>
    </source>
</reference>
<comment type="function">
    <text evidence="1">Plays a role in peptidoglycan recycling by cleaving the terminal beta-1,4-linked N-acetylglucosamine (GlcNAc) from peptide-linked peptidoglycan fragments, giving rise to free GlcNAc, anhydro-N-acetylmuramic acid and anhydro-N-acetylmuramic acid-linked peptides.</text>
</comment>
<comment type="catalytic activity">
    <reaction evidence="1">
        <text>Hydrolysis of terminal non-reducing N-acetyl-D-hexosamine residues in N-acetyl-beta-D-hexosaminides.</text>
        <dbReference type="EC" id="3.2.1.52"/>
    </reaction>
</comment>
<comment type="pathway">
    <text evidence="1">Cell wall biogenesis; peptidoglycan recycling.</text>
</comment>
<comment type="subcellular location">
    <subcellularLocation>
        <location evidence="1">Cytoplasm</location>
    </subcellularLocation>
</comment>
<comment type="similarity">
    <text evidence="1">Belongs to the glycosyl hydrolase 3 family. NagZ subfamily.</text>
</comment>
<accession>A1KSD9</accession>
<protein>
    <recommendedName>
        <fullName evidence="1">Beta-hexosaminidase</fullName>
        <ecNumber evidence="1">3.2.1.52</ecNumber>
    </recommendedName>
    <alternativeName>
        <fullName evidence="1">Beta-N-acetylhexosaminidase</fullName>
    </alternativeName>
    <alternativeName>
        <fullName evidence="1">N-acetyl-beta-glucosaminidase</fullName>
    </alternativeName>
</protein>
<keyword id="KW-0131">Cell cycle</keyword>
<keyword id="KW-0132">Cell division</keyword>
<keyword id="KW-0133">Cell shape</keyword>
<keyword id="KW-0961">Cell wall biogenesis/degradation</keyword>
<keyword id="KW-0963">Cytoplasm</keyword>
<keyword id="KW-0326">Glycosidase</keyword>
<keyword id="KW-0378">Hydrolase</keyword>
<keyword id="KW-0573">Peptidoglycan synthesis</keyword>
<gene>
    <name evidence="1" type="primary">nagZ</name>
    <name type="ordered locus">NMC0469</name>
</gene>
<evidence type="ECO:0000255" key="1">
    <source>
        <dbReference type="HAMAP-Rule" id="MF_00364"/>
    </source>
</evidence>
<proteinExistence type="inferred from homology"/>
<sequence>MTVPHIPRGPVMADIAAFRLTEEEKQRLLDPAVGGIILFRRNFQNIEQLKTLTAEIKALRTPELIIAVDHEGGRVQRFIEGFTRLPAMSTLGEIWDKDGASAAETAAGQVGRVLATELSACGIDLSFTPVLDLDWGNCPVIGNRSFHHNPEAVAHLALALQKGLAKGGMKSCGKHFPGHGFVEGDSHLVLPEDRRSLSELEAADLAPFHIMSREGMAAVMPAHVVYPQVDTKPAGFSEIWLKQILRRDIGFKGVIFSDDLTMEGACGVGGLKERARISFEAGCDIVLVCNRPDLVDELREDFRIPDNPALAQRWQYMANTLGSAAAQAVMQTADFQEAQAFVAGLASPQDTAGGVKVGEAF</sequence>
<name>NAGZ_NEIMF</name>
<organism>
    <name type="scientific">Neisseria meningitidis serogroup C / serotype 2a (strain ATCC 700532 / DSM 15464 / FAM18)</name>
    <dbReference type="NCBI Taxonomy" id="272831"/>
    <lineage>
        <taxon>Bacteria</taxon>
        <taxon>Pseudomonadati</taxon>
        <taxon>Pseudomonadota</taxon>
        <taxon>Betaproteobacteria</taxon>
        <taxon>Neisseriales</taxon>
        <taxon>Neisseriaceae</taxon>
        <taxon>Neisseria</taxon>
    </lineage>
</organism>
<feature type="chain" id="PRO_1000005657" description="Beta-hexosaminidase">
    <location>
        <begin position="1"/>
        <end position="361"/>
    </location>
</feature>
<feature type="active site" description="Proton donor/acceptor" evidence="1">
    <location>
        <position position="187"/>
    </location>
</feature>
<feature type="active site" description="Nucleophile" evidence="1">
    <location>
        <position position="258"/>
    </location>
</feature>
<feature type="binding site" evidence="1">
    <location>
        <position position="69"/>
    </location>
    <ligand>
        <name>substrate</name>
    </ligand>
</feature>
<feature type="binding site" evidence="1">
    <location>
        <position position="77"/>
    </location>
    <ligand>
        <name>substrate</name>
    </ligand>
</feature>
<feature type="binding site" evidence="1">
    <location>
        <position position="144"/>
    </location>
    <ligand>
        <name>substrate</name>
    </ligand>
</feature>
<feature type="binding site" evidence="1">
    <location>
        <begin position="174"/>
        <end position="175"/>
    </location>
    <ligand>
        <name>substrate</name>
    </ligand>
</feature>
<feature type="site" description="Important for catalytic activity" evidence="1">
    <location>
        <position position="185"/>
    </location>
</feature>